<keyword id="KW-0067">ATP-binding</keyword>
<keyword id="KW-0093">Biotin biosynthesis</keyword>
<keyword id="KW-0963">Cytoplasm</keyword>
<keyword id="KW-0436">Ligase</keyword>
<keyword id="KW-0460">Magnesium</keyword>
<keyword id="KW-0479">Metal-binding</keyword>
<keyword id="KW-0547">Nucleotide-binding</keyword>
<keyword id="KW-1185">Reference proteome</keyword>
<evidence type="ECO:0000255" key="1">
    <source>
        <dbReference type="HAMAP-Rule" id="MF_00336"/>
    </source>
</evidence>
<sequence length="230" mass="24094">MSIVIMTGTGTDVGKTVATGAVACVLQKEGYEPFIVKPAQTGEPEGEGDAPRVTALTGIDNAETLYRFPEPLAPATSARRANMPYPELTTVAEEIKSFDKPGRVVLVEGAGGLLVRIGQDWTIADLARELGAPIIVVCSTGLGSLNEAELTVEAATRRGLTVLGLIGGSIPDSPDLATRCNKEDLPVVTGTDVLGYIPEGAGGWSQQRFVQEAPGFFVPDVVGRVTRESD</sequence>
<proteinExistence type="inferred from homology"/>
<accession>C4LIG1</accession>
<gene>
    <name evidence="1" type="primary">bioD</name>
    <name type="ordered locus">ckrop_0862</name>
</gene>
<dbReference type="EC" id="6.3.3.3" evidence="1"/>
<dbReference type="EMBL" id="CP001620">
    <property type="protein sequence ID" value="ACR17616.1"/>
    <property type="molecule type" value="Genomic_DNA"/>
</dbReference>
<dbReference type="RefSeq" id="WP_012731503.1">
    <property type="nucleotide sequence ID" value="NC_012704.1"/>
</dbReference>
<dbReference type="SMR" id="C4LIG1"/>
<dbReference type="STRING" id="645127.ckrop_0862"/>
<dbReference type="KEGG" id="ckp:ckrop_0862"/>
<dbReference type="eggNOG" id="COG0132">
    <property type="taxonomic scope" value="Bacteria"/>
</dbReference>
<dbReference type="HOGENOM" id="CLU_072551_1_0_11"/>
<dbReference type="OrthoDB" id="9802610at2"/>
<dbReference type="UniPathway" id="UPA00078">
    <property type="reaction ID" value="UER00161"/>
</dbReference>
<dbReference type="Proteomes" id="UP000001473">
    <property type="component" value="Chromosome"/>
</dbReference>
<dbReference type="GO" id="GO:0005829">
    <property type="term" value="C:cytosol"/>
    <property type="evidence" value="ECO:0007669"/>
    <property type="project" value="TreeGrafter"/>
</dbReference>
<dbReference type="GO" id="GO:0005524">
    <property type="term" value="F:ATP binding"/>
    <property type="evidence" value="ECO:0007669"/>
    <property type="project" value="UniProtKB-UniRule"/>
</dbReference>
<dbReference type="GO" id="GO:0004141">
    <property type="term" value="F:dethiobiotin synthase activity"/>
    <property type="evidence" value="ECO:0007669"/>
    <property type="project" value="UniProtKB-UniRule"/>
</dbReference>
<dbReference type="GO" id="GO:0000287">
    <property type="term" value="F:magnesium ion binding"/>
    <property type="evidence" value="ECO:0007669"/>
    <property type="project" value="UniProtKB-UniRule"/>
</dbReference>
<dbReference type="GO" id="GO:0009102">
    <property type="term" value="P:biotin biosynthetic process"/>
    <property type="evidence" value="ECO:0007669"/>
    <property type="project" value="UniProtKB-UniRule"/>
</dbReference>
<dbReference type="CDD" id="cd03109">
    <property type="entry name" value="DTBS"/>
    <property type="match status" value="1"/>
</dbReference>
<dbReference type="Gene3D" id="3.40.50.300">
    <property type="entry name" value="P-loop containing nucleotide triphosphate hydrolases"/>
    <property type="match status" value="1"/>
</dbReference>
<dbReference type="HAMAP" id="MF_00336">
    <property type="entry name" value="BioD"/>
    <property type="match status" value="1"/>
</dbReference>
<dbReference type="InterPro" id="IPR004472">
    <property type="entry name" value="DTB_synth_BioD"/>
</dbReference>
<dbReference type="InterPro" id="IPR027417">
    <property type="entry name" value="P-loop_NTPase"/>
</dbReference>
<dbReference type="NCBIfam" id="TIGR00347">
    <property type="entry name" value="bioD"/>
    <property type="match status" value="1"/>
</dbReference>
<dbReference type="PANTHER" id="PTHR43210">
    <property type="entry name" value="DETHIOBIOTIN SYNTHETASE"/>
    <property type="match status" value="1"/>
</dbReference>
<dbReference type="PANTHER" id="PTHR43210:SF5">
    <property type="entry name" value="DETHIOBIOTIN SYNTHETASE"/>
    <property type="match status" value="1"/>
</dbReference>
<dbReference type="Pfam" id="PF13500">
    <property type="entry name" value="AAA_26"/>
    <property type="match status" value="1"/>
</dbReference>
<dbReference type="PIRSF" id="PIRSF006755">
    <property type="entry name" value="DTB_synth"/>
    <property type="match status" value="1"/>
</dbReference>
<dbReference type="SUPFAM" id="SSF52540">
    <property type="entry name" value="P-loop containing nucleoside triphosphate hydrolases"/>
    <property type="match status" value="1"/>
</dbReference>
<name>BIOD_CORK4</name>
<organism>
    <name type="scientific">Corynebacterium kroppenstedtii (strain DSM 44385 / JCM 11950 / CIP 105744 / CCUG 35717)</name>
    <dbReference type="NCBI Taxonomy" id="645127"/>
    <lineage>
        <taxon>Bacteria</taxon>
        <taxon>Bacillati</taxon>
        <taxon>Actinomycetota</taxon>
        <taxon>Actinomycetes</taxon>
        <taxon>Mycobacteriales</taxon>
        <taxon>Corynebacteriaceae</taxon>
        <taxon>Corynebacterium</taxon>
    </lineage>
</organism>
<comment type="function">
    <text evidence="1">Catalyzes a mechanistically unusual reaction, the ATP-dependent insertion of CO2 between the N7 and N8 nitrogen atoms of 7,8-diaminopelargonic acid (DAPA, also called 7,8-diammoniononanoate) to form a ureido ring.</text>
</comment>
<comment type="catalytic activity">
    <reaction evidence="1">
        <text>(7R,8S)-7,8-diammoniononanoate + CO2 + ATP = (4R,5S)-dethiobiotin + ADP + phosphate + 3 H(+)</text>
        <dbReference type="Rhea" id="RHEA:15805"/>
        <dbReference type="ChEBI" id="CHEBI:15378"/>
        <dbReference type="ChEBI" id="CHEBI:16526"/>
        <dbReference type="ChEBI" id="CHEBI:30616"/>
        <dbReference type="ChEBI" id="CHEBI:43474"/>
        <dbReference type="ChEBI" id="CHEBI:149469"/>
        <dbReference type="ChEBI" id="CHEBI:149473"/>
        <dbReference type="ChEBI" id="CHEBI:456216"/>
        <dbReference type="EC" id="6.3.3.3"/>
    </reaction>
</comment>
<comment type="cofactor">
    <cofactor evidence="1">
        <name>Mg(2+)</name>
        <dbReference type="ChEBI" id="CHEBI:18420"/>
    </cofactor>
</comment>
<comment type="pathway">
    <text evidence="1">Cofactor biosynthesis; biotin biosynthesis; biotin from 7,8-diaminononanoate: step 1/2.</text>
</comment>
<comment type="subunit">
    <text evidence="1">Homodimer.</text>
</comment>
<comment type="subcellular location">
    <subcellularLocation>
        <location evidence="1">Cytoplasm</location>
    </subcellularLocation>
</comment>
<comment type="similarity">
    <text evidence="1">Belongs to the dethiobiotin synthetase family.</text>
</comment>
<feature type="chain" id="PRO_1000205211" description="ATP-dependent dethiobiotin synthetase BioD">
    <location>
        <begin position="1"/>
        <end position="230"/>
    </location>
</feature>
<feature type="active site" evidence="1">
    <location>
        <position position="37"/>
    </location>
</feature>
<feature type="binding site" evidence="1">
    <location>
        <begin position="12"/>
        <end position="17"/>
    </location>
    <ligand>
        <name>ATP</name>
        <dbReference type="ChEBI" id="CHEBI:30616"/>
    </ligand>
</feature>
<feature type="binding site" evidence="1">
    <location>
        <position position="16"/>
    </location>
    <ligand>
        <name>Mg(2+)</name>
        <dbReference type="ChEBI" id="CHEBI:18420"/>
    </ligand>
</feature>
<feature type="binding site" evidence="1">
    <location>
        <position position="41"/>
    </location>
    <ligand>
        <name>substrate</name>
    </ligand>
</feature>
<feature type="binding site" evidence="1">
    <location>
        <position position="49"/>
    </location>
    <ligand>
        <name>ATP</name>
        <dbReference type="ChEBI" id="CHEBI:30616"/>
    </ligand>
</feature>
<feature type="binding site" evidence="1">
    <location>
        <position position="49"/>
    </location>
    <ligand>
        <name>Mg(2+)</name>
        <dbReference type="ChEBI" id="CHEBI:18420"/>
    </ligand>
</feature>
<feature type="binding site" evidence="1">
    <location>
        <begin position="108"/>
        <end position="111"/>
    </location>
    <ligand>
        <name>ATP</name>
        <dbReference type="ChEBI" id="CHEBI:30616"/>
    </ligand>
</feature>
<feature type="binding site" evidence="1">
    <location>
        <position position="108"/>
    </location>
    <ligand>
        <name>Mg(2+)</name>
        <dbReference type="ChEBI" id="CHEBI:18420"/>
    </ligand>
</feature>
<feature type="binding site" evidence="1">
    <location>
        <begin position="168"/>
        <end position="169"/>
    </location>
    <ligand>
        <name>ATP</name>
        <dbReference type="ChEBI" id="CHEBI:30616"/>
    </ligand>
</feature>
<feature type="binding site" evidence="1">
    <location>
        <begin position="198"/>
        <end position="200"/>
    </location>
    <ligand>
        <name>ATP</name>
        <dbReference type="ChEBI" id="CHEBI:30616"/>
    </ligand>
</feature>
<reference key="1">
    <citation type="journal article" date="2008" name="J. Biotechnol.">
        <title>Ultrafast pyrosequencing of Corynebacterium kroppenstedtii DSM44385 revealed insights into the physiology of a lipophilic corynebacterium that lacks mycolic acids.</title>
        <authorList>
            <person name="Tauch A."/>
            <person name="Schneider J."/>
            <person name="Szczepanowski R."/>
            <person name="Tilker A."/>
            <person name="Viehoever P."/>
            <person name="Gartemann K.-H."/>
            <person name="Arnold W."/>
            <person name="Blom J."/>
            <person name="Brinkrolf K."/>
            <person name="Brune I."/>
            <person name="Goetker S."/>
            <person name="Weisshaar B."/>
            <person name="Goesmann A."/>
            <person name="Droege M."/>
            <person name="Puehler A."/>
        </authorList>
    </citation>
    <scope>NUCLEOTIDE SEQUENCE [LARGE SCALE GENOMIC DNA]</scope>
    <source>
        <strain>DSM 44385 / JCM 11950 / CIP 105744 / CCUG 35717</strain>
    </source>
</reference>
<protein>
    <recommendedName>
        <fullName evidence="1">ATP-dependent dethiobiotin synthetase BioD</fullName>
        <ecNumber evidence="1">6.3.3.3</ecNumber>
    </recommendedName>
    <alternativeName>
        <fullName evidence="1">DTB synthetase</fullName>
        <shortName evidence="1">DTBS</shortName>
    </alternativeName>
    <alternativeName>
        <fullName evidence="1">Dethiobiotin synthase</fullName>
    </alternativeName>
</protein>